<gene>
    <name evidence="1" type="primary">secY</name>
    <name type="ordered locus">HP_1300</name>
</gene>
<keyword id="KW-0997">Cell inner membrane</keyword>
<keyword id="KW-1003">Cell membrane</keyword>
<keyword id="KW-0472">Membrane</keyword>
<keyword id="KW-0653">Protein transport</keyword>
<keyword id="KW-1185">Reference proteome</keyword>
<keyword id="KW-0811">Translocation</keyword>
<keyword id="KW-0812">Transmembrane</keyword>
<keyword id="KW-1133">Transmembrane helix</keyword>
<keyword id="KW-0813">Transport</keyword>
<dbReference type="EMBL" id="AE000511">
    <property type="protein sequence ID" value="AAD08341.1"/>
    <property type="molecule type" value="Genomic_DNA"/>
</dbReference>
<dbReference type="PIR" id="D64682">
    <property type="entry name" value="D64682"/>
</dbReference>
<dbReference type="RefSeq" id="NP_208092.1">
    <property type="nucleotide sequence ID" value="NC_000915.1"/>
</dbReference>
<dbReference type="RefSeq" id="WP_001030187.1">
    <property type="nucleotide sequence ID" value="NC_018939.1"/>
</dbReference>
<dbReference type="DIP" id="DIP-3770N"/>
<dbReference type="FunCoup" id="O25879">
    <property type="interactions" value="317"/>
</dbReference>
<dbReference type="IntAct" id="O25879">
    <property type="interactions" value="1"/>
</dbReference>
<dbReference type="MINT" id="O25879"/>
<dbReference type="STRING" id="85962.HP_1300"/>
<dbReference type="PaxDb" id="85962-C694_06715"/>
<dbReference type="EnsemblBacteria" id="AAD08341">
    <property type="protein sequence ID" value="AAD08341"/>
    <property type="gene ID" value="HP_1300"/>
</dbReference>
<dbReference type="KEGG" id="heo:C694_06715"/>
<dbReference type="KEGG" id="hpy:HP_1300"/>
<dbReference type="PATRIC" id="fig|85962.47.peg.1394"/>
<dbReference type="eggNOG" id="COG0201">
    <property type="taxonomic scope" value="Bacteria"/>
</dbReference>
<dbReference type="InParanoid" id="O25879"/>
<dbReference type="OrthoDB" id="9809248at2"/>
<dbReference type="PhylomeDB" id="O25879"/>
<dbReference type="Proteomes" id="UP000000429">
    <property type="component" value="Chromosome"/>
</dbReference>
<dbReference type="GO" id="GO:0031522">
    <property type="term" value="C:cell envelope Sec protein transport complex"/>
    <property type="evidence" value="ECO:0000318"/>
    <property type="project" value="GO_Central"/>
</dbReference>
<dbReference type="GO" id="GO:0005886">
    <property type="term" value="C:plasma membrane"/>
    <property type="evidence" value="ECO:0000318"/>
    <property type="project" value="GO_Central"/>
</dbReference>
<dbReference type="GO" id="GO:0008320">
    <property type="term" value="F:protein transmembrane transporter activity"/>
    <property type="evidence" value="ECO:0000318"/>
    <property type="project" value="GO_Central"/>
</dbReference>
<dbReference type="GO" id="GO:0005048">
    <property type="term" value="F:signal sequence binding"/>
    <property type="evidence" value="ECO:0000318"/>
    <property type="project" value="GO_Central"/>
</dbReference>
<dbReference type="GO" id="GO:0043952">
    <property type="term" value="P:protein transport by the Sec complex"/>
    <property type="evidence" value="ECO:0007669"/>
    <property type="project" value="UniProtKB-UniRule"/>
</dbReference>
<dbReference type="GO" id="GO:0006616">
    <property type="term" value="P:SRP-dependent cotranslational protein targeting to membrane, translocation"/>
    <property type="evidence" value="ECO:0000318"/>
    <property type="project" value="GO_Central"/>
</dbReference>
<dbReference type="FunFam" id="1.10.3370.10:FF:000001">
    <property type="entry name" value="Preprotein translocase subunit SecY"/>
    <property type="match status" value="1"/>
</dbReference>
<dbReference type="Gene3D" id="1.10.3370.10">
    <property type="entry name" value="SecY subunit domain"/>
    <property type="match status" value="1"/>
</dbReference>
<dbReference type="HAMAP" id="MF_01465">
    <property type="entry name" value="SecY"/>
    <property type="match status" value="1"/>
</dbReference>
<dbReference type="InterPro" id="IPR026593">
    <property type="entry name" value="SecY"/>
</dbReference>
<dbReference type="InterPro" id="IPR002208">
    <property type="entry name" value="SecY/SEC61-alpha"/>
</dbReference>
<dbReference type="InterPro" id="IPR030659">
    <property type="entry name" value="SecY_CS"/>
</dbReference>
<dbReference type="InterPro" id="IPR023201">
    <property type="entry name" value="SecY_dom_sf"/>
</dbReference>
<dbReference type="NCBIfam" id="TIGR00967">
    <property type="entry name" value="3a0501s007"/>
    <property type="match status" value="1"/>
</dbReference>
<dbReference type="PANTHER" id="PTHR10906">
    <property type="entry name" value="SECY/SEC61-ALPHA FAMILY MEMBER"/>
    <property type="match status" value="1"/>
</dbReference>
<dbReference type="Pfam" id="PF00344">
    <property type="entry name" value="SecY"/>
    <property type="match status" value="1"/>
</dbReference>
<dbReference type="PIRSF" id="PIRSF004557">
    <property type="entry name" value="SecY"/>
    <property type="match status" value="1"/>
</dbReference>
<dbReference type="PRINTS" id="PR00303">
    <property type="entry name" value="SECYTRNLCASE"/>
</dbReference>
<dbReference type="SUPFAM" id="SSF103491">
    <property type="entry name" value="Preprotein translocase SecY subunit"/>
    <property type="match status" value="1"/>
</dbReference>
<dbReference type="PROSITE" id="PS00755">
    <property type="entry name" value="SECY_1"/>
    <property type="match status" value="1"/>
</dbReference>
<dbReference type="PROSITE" id="PS00756">
    <property type="entry name" value="SECY_2"/>
    <property type="match status" value="1"/>
</dbReference>
<organism>
    <name type="scientific">Helicobacter pylori (strain ATCC 700392 / 26695)</name>
    <name type="common">Campylobacter pylori</name>
    <dbReference type="NCBI Taxonomy" id="85962"/>
    <lineage>
        <taxon>Bacteria</taxon>
        <taxon>Pseudomonadati</taxon>
        <taxon>Campylobacterota</taxon>
        <taxon>Epsilonproteobacteria</taxon>
        <taxon>Campylobacterales</taxon>
        <taxon>Helicobacteraceae</taxon>
        <taxon>Helicobacter</taxon>
    </lineage>
</organism>
<name>SECY_HELPY</name>
<accession>O25879</accession>
<comment type="function">
    <text evidence="1">The central subunit of the protein translocation channel SecYEG. Consists of two halves formed by TMs 1-5 and 6-10. These two domains form a lateral gate at the front which open onto the bilayer between TMs 2 and 7, and are clamped together by SecE at the back. The channel is closed by both a pore ring composed of hydrophobic SecY resides and a short helix (helix 2A) on the extracellular side of the membrane which forms a plug. The plug probably moves laterally to allow the channel to open. The ring and the pore may move independently.</text>
</comment>
<comment type="subunit">
    <text evidence="1">Component of the Sec protein translocase complex. Heterotrimer consisting of SecY, SecE and SecG subunits. The heterotrimers can form oligomers, although 1 heterotrimer is thought to be able to translocate proteins. Interacts with the ribosome. Interacts with SecDF, and other proteins may be involved. Interacts with SecA.</text>
</comment>
<comment type="subcellular location">
    <subcellularLocation>
        <location evidence="1">Cell inner membrane</location>
        <topology evidence="1">Multi-pass membrane protein</topology>
    </subcellularLocation>
</comment>
<comment type="similarity">
    <text evidence="1">Belongs to the SecY/SEC61-alpha family.</text>
</comment>
<sequence>MNKAIASKILITLGFLFLYRVLAYIPIPGVDLAAIKAFFDSNSNNALGLFNMFSGNAVSRLSIISLGIMPYITSSIIMELLSATFPNLAKMKKERDGMQKYMQIVRYLTILITLIQAVSVSVGLRSISGGANGAIMIDMQVFMIVSAFSMLTGTMLLMWIGEQITQRGVGNGISLIIFAGIVSGIPSAISGTFNLVNTGVINILMLIGIVLIVLATIFAIIYVELAERRIPISYARKVVMQNQNKRIMNYIPIKLNLSGVIPPIFASALLVFPSTILQQATSNKTLQAVADFLSPQGYAYNILMFLLIIFFAYFYSSIVFNSKDIADNLRRNGGYIPGLRPGEGTSSFLNSVASKLTLWGSLYLALISTVPWILVKAMGVPFYFGGTAVLIVVQVAIDTMKKIEAQIYMSKYKTLSAVGF</sequence>
<reference key="1">
    <citation type="journal article" date="1997" name="Nature">
        <title>The complete genome sequence of the gastric pathogen Helicobacter pylori.</title>
        <authorList>
            <person name="Tomb J.-F."/>
            <person name="White O."/>
            <person name="Kerlavage A.R."/>
            <person name="Clayton R.A."/>
            <person name="Sutton G.G."/>
            <person name="Fleischmann R.D."/>
            <person name="Ketchum K.A."/>
            <person name="Klenk H.-P."/>
            <person name="Gill S.R."/>
            <person name="Dougherty B.A."/>
            <person name="Nelson K.E."/>
            <person name="Quackenbush J."/>
            <person name="Zhou L."/>
            <person name="Kirkness E.F."/>
            <person name="Peterson S.N."/>
            <person name="Loftus B.J."/>
            <person name="Richardson D.L."/>
            <person name="Dodson R.J."/>
            <person name="Khalak H.G."/>
            <person name="Glodek A."/>
            <person name="McKenney K."/>
            <person name="FitzGerald L.M."/>
            <person name="Lee N."/>
            <person name="Adams M.D."/>
            <person name="Hickey E.K."/>
            <person name="Berg D.E."/>
            <person name="Gocayne J.D."/>
            <person name="Utterback T.R."/>
            <person name="Peterson J.D."/>
            <person name="Kelley J.M."/>
            <person name="Cotton M.D."/>
            <person name="Weidman J.F."/>
            <person name="Fujii C."/>
            <person name="Bowman C."/>
            <person name="Watthey L."/>
            <person name="Wallin E."/>
            <person name="Hayes W.S."/>
            <person name="Borodovsky M."/>
            <person name="Karp P.D."/>
            <person name="Smith H.O."/>
            <person name="Fraser C.M."/>
            <person name="Venter J.C."/>
        </authorList>
    </citation>
    <scope>NUCLEOTIDE SEQUENCE [LARGE SCALE GENOMIC DNA]</scope>
    <source>
        <strain>ATCC 700392 / 26695</strain>
    </source>
</reference>
<feature type="chain" id="PRO_0000131725" description="Protein translocase subunit SecY">
    <location>
        <begin position="1"/>
        <end position="420"/>
    </location>
</feature>
<feature type="transmembrane region" description="Helical" evidence="1">
    <location>
        <begin position="9"/>
        <end position="29"/>
    </location>
</feature>
<feature type="transmembrane region" description="Helical" evidence="1">
    <location>
        <begin position="61"/>
        <end position="81"/>
    </location>
</feature>
<feature type="transmembrane region" description="Helical" evidence="1">
    <location>
        <begin position="104"/>
        <end position="124"/>
    </location>
</feature>
<feature type="transmembrane region" description="Helical" evidence="1">
    <location>
        <begin position="141"/>
        <end position="161"/>
    </location>
</feature>
<feature type="transmembrane region" description="Helical" evidence="1">
    <location>
        <begin position="173"/>
        <end position="193"/>
    </location>
</feature>
<feature type="transmembrane region" description="Helical" evidence="1">
    <location>
        <begin position="203"/>
        <end position="223"/>
    </location>
</feature>
<feature type="transmembrane region" description="Helical" evidence="1">
    <location>
        <begin position="257"/>
        <end position="277"/>
    </location>
</feature>
<feature type="transmembrane region" description="Helical" evidence="1">
    <location>
        <begin position="300"/>
        <end position="320"/>
    </location>
</feature>
<feature type="transmembrane region" description="Helical" evidence="1">
    <location>
        <begin position="355"/>
        <end position="375"/>
    </location>
</feature>
<feature type="transmembrane region" description="Helical" evidence="1">
    <location>
        <begin position="377"/>
        <end position="397"/>
    </location>
</feature>
<protein>
    <recommendedName>
        <fullName evidence="1">Protein translocase subunit SecY</fullName>
    </recommendedName>
</protein>
<evidence type="ECO:0000255" key="1">
    <source>
        <dbReference type="HAMAP-Rule" id="MF_01465"/>
    </source>
</evidence>
<proteinExistence type="inferred from homology"/>